<name>NET1_MOUSE</name>
<comment type="function">
    <text evidence="2 7 10 12">Netrins control guidance of CNS commissural axons and peripheral motor axons. Its association with either DCC or some UNC5 receptors will lead to axon attraction or repulsion, respectively. Binding to UNC5C might cause dissociation of UNC5C from polymerized TUBB3 in microtubules and thereby lead to increased microtubule dynamics and axon repulsion (PubMed:28483977). Involved in dorsal root ganglion axon projection towards the spinal cord (PubMed:28483977). It also serves as a survival factor via its association with its receptors which prevent the initiation of apoptosis. Involved in colorectal tumorigenesis by regulating apoptosis (By similarity).</text>
</comment>
<comment type="subunit">
    <text evidence="2 8 9">Binds to its receptors; DCC, UNC5A, UNC5B, UNC5C and probably UNC5D (By similarity). Binds to its receptor; DSCAM (PubMed:18585357). Interacts with APP (PubMed:27068745).</text>
</comment>
<comment type="interaction">
    <interactant intactId="EBI-1798844">
        <id>O09118</id>
    </interactant>
    <interactant intactId="EBI-11658250">
        <id>Q8K1S3-1</id>
        <label>Unc5b</label>
    </interactant>
    <organismsDiffer>false</organismsDiffer>
    <experiments>4</experiments>
</comment>
<comment type="subcellular location">
    <subcellularLocation>
        <location evidence="11">Secreted</location>
    </subcellularLocation>
    <subcellularLocation>
        <location evidence="2">Cytoplasm</location>
    </subcellularLocation>
    <text evidence="11">Mainly secreted.</text>
</comment>
<comment type="tissue specificity">
    <text evidence="7">In the embryo, widely expressed in the developing nervous system and in mesodermal tissues.</text>
</comment>
<sequence length="604" mass="67810">MMRAVWEALAALAAVACLVGAVRGGPGLSMFAGQAAQPDPCSDENGHPRRCIPDFVNAAFGKDVRVSSTCGRPPARYCVVSERGEERLRSCHLCNSSDPKKAHPPAFLTDLNNPHNLTCWQSENYLQFPHNVTLTLSLGKKFEVTYVSLQFCSPRPESMAIYKSMDYGRTWVPFQFYSTQCRKMYNRPHRAPITKQNEQEAVCTDSHTDMRPLSGGLIAFSTLDGRPSAHDFDNSPVLQDWVTATDIRVAFSRLHTFGDENEDDSELARDSYYYAVSDLQVGGRCKCNGHAARCVRDRDDSLVCDCRHNTAGPECDRCKPFHYDRPWQRATAREANECVACNCNLHARRCRFNMELYKLSGRKSGGVCLNCRHNTAGRHCHYCKEGFYRDMGKPITHRKACKACDCHPVGAAGKTCNQTTGQCPCKDGVTGITCNRCAKGYQQSRSPIAPCIKIPVAPPTTAASSVEEPEDCDSYCKASKGKLKMNMKKYCRKDYAVQIHILKADKAGDWWKFTVNIISVYKQGTSRIRRGDQSLWIRSRDIACKCPKIKPLKKYLLLGNAEDSPDQSGIVADKSSLVIQWRDTWARRLRKFQQREKKGKCKKA</sequence>
<organism>
    <name type="scientific">Mus musculus</name>
    <name type="common">Mouse</name>
    <dbReference type="NCBI Taxonomy" id="10090"/>
    <lineage>
        <taxon>Eukaryota</taxon>
        <taxon>Metazoa</taxon>
        <taxon>Chordata</taxon>
        <taxon>Craniata</taxon>
        <taxon>Vertebrata</taxon>
        <taxon>Euteleostomi</taxon>
        <taxon>Mammalia</taxon>
        <taxon>Eutheria</taxon>
        <taxon>Euarchontoglires</taxon>
        <taxon>Glires</taxon>
        <taxon>Rodentia</taxon>
        <taxon>Myomorpha</taxon>
        <taxon>Muroidea</taxon>
        <taxon>Muridae</taxon>
        <taxon>Murinae</taxon>
        <taxon>Mus</taxon>
        <taxon>Mus</taxon>
    </lineage>
</organism>
<evidence type="ECO:0000250" key="1"/>
<evidence type="ECO:0000250" key="2">
    <source>
        <dbReference type="UniProtKB" id="O95631"/>
    </source>
</evidence>
<evidence type="ECO:0000255" key="3"/>
<evidence type="ECO:0000255" key="4">
    <source>
        <dbReference type="PROSITE-ProRule" id="PRU00295"/>
    </source>
</evidence>
<evidence type="ECO:0000255" key="5">
    <source>
        <dbReference type="PROSITE-ProRule" id="PRU00460"/>
    </source>
</evidence>
<evidence type="ECO:0000255" key="6">
    <source>
        <dbReference type="PROSITE-ProRule" id="PRU00466"/>
    </source>
</evidence>
<evidence type="ECO:0000269" key="7">
    <source>
    </source>
</evidence>
<evidence type="ECO:0000269" key="8">
    <source>
    </source>
</evidence>
<evidence type="ECO:0000269" key="9">
    <source>
    </source>
</evidence>
<evidence type="ECO:0000269" key="10">
    <source>
    </source>
</evidence>
<evidence type="ECO:0000269" key="11">
    <source>
    </source>
</evidence>
<evidence type="ECO:0000269" key="12">
    <source>
    </source>
</evidence>
<evidence type="ECO:0000305" key="13"/>
<evidence type="ECO:0007829" key="14">
    <source>
        <dbReference type="PDB" id="4OVE"/>
    </source>
</evidence>
<reference key="1">
    <citation type="journal article" date="1996" name="Cell">
        <title>Netrin-1 is required for commissural axon guidance in the developing vertebrate nervous system.</title>
        <authorList>
            <person name="Serafini T."/>
            <person name="Colamarino S.A."/>
            <person name="Leonardo E.D."/>
            <person name="Wang H."/>
            <person name="Beddington R."/>
            <person name="Skarnes W.C."/>
            <person name="Tessier-Lavigne M."/>
        </authorList>
    </citation>
    <scope>NUCLEOTIDE SEQUENCE [MRNA]</scope>
    <scope>FUNCTION</scope>
    <source>
        <tissue>Embryonic brain</tissue>
    </source>
</reference>
<reference key="2">
    <citation type="journal article" date="1999" name="Mech. Dev.">
        <title>Divergent properties of mouse netrins.</title>
        <authorList>
            <person name="Pueschel A.W."/>
        </authorList>
    </citation>
    <scope>NUCLEOTIDE SEQUENCE [MRNA]</scope>
    <scope>FUNCTION</scope>
    <scope>TISSUE SPECIFICITY</scope>
</reference>
<reference key="3">
    <citation type="journal article" date="2009" name="PLoS Biol.">
        <title>Lineage-specific biology revealed by a finished genome assembly of the mouse.</title>
        <authorList>
            <person name="Church D.M."/>
            <person name="Goodstadt L."/>
            <person name="Hillier L.W."/>
            <person name="Zody M.C."/>
            <person name="Goldstein S."/>
            <person name="She X."/>
            <person name="Bult C.J."/>
            <person name="Agarwala R."/>
            <person name="Cherry J.L."/>
            <person name="DiCuccio M."/>
            <person name="Hlavina W."/>
            <person name="Kapustin Y."/>
            <person name="Meric P."/>
            <person name="Maglott D."/>
            <person name="Birtle Z."/>
            <person name="Marques A.C."/>
            <person name="Graves T."/>
            <person name="Zhou S."/>
            <person name="Teague B."/>
            <person name="Potamousis K."/>
            <person name="Churas C."/>
            <person name="Place M."/>
            <person name="Herschleb J."/>
            <person name="Runnheim R."/>
            <person name="Forrest D."/>
            <person name="Amos-Landgraf J."/>
            <person name="Schwartz D.C."/>
            <person name="Cheng Z."/>
            <person name="Lindblad-Toh K."/>
            <person name="Eichler E.E."/>
            <person name="Ponting C.P."/>
        </authorList>
    </citation>
    <scope>NUCLEOTIDE SEQUENCE [LARGE SCALE GENOMIC DNA]</scope>
    <source>
        <strain>C57BL/6J</strain>
    </source>
</reference>
<reference key="4">
    <citation type="submission" date="2005-07" db="EMBL/GenBank/DDBJ databases">
        <authorList>
            <person name="Mural R.J."/>
            <person name="Adams M.D."/>
            <person name="Myers E.W."/>
            <person name="Smith H.O."/>
            <person name="Venter J.C."/>
        </authorList>
    </citation>
    <scope>NUCLEOTIDE SEQUENCE [LARGE SCALE GENOMIC DNA]</scope>
</reference>
<reference key="5">
    <citation type="journal article" date="2004" name="Genome Res.">
        <title>The status, quality, and expansion of the NIH full-length cDNA project: the Mammalian Gene Collection (MGC).</title>
        <authorList>
            <consortium name="The MGC Project Team"/>
        </authorList>
    </citation>
    <scope>NUCLEOTIDE SEQUENCE [LARGE SCALE MRNA]</scope>
    <source>
        <tissue>Brain</tissue>
    </source>
</reference>
<reference key="6">
    <citation type="journal article" date="1995" name="Proc. Natl. Acad. Sci. U.S.A.">
        <title>Capturing genes encoding membrane and secreted proteins important for mouse development.</title>
        <authorList>
            <person name="Skarnes W.C."/>
            <person name="Moss J.E."/>
            <person name="Hurtley S.M."/>
            <person name="Beddington R.S."/>
        </authorList>
    </citation>
    <scope>NUCLEOTIDE SEQUENCE [MRNA] OF 352-398</scope>
    <scope>SUBCELLULAR LOCATION</scope>
</reference>
<reference key="7">
    <citation type="journal article" date="2008" name="Cell">
        <title>DSCAM is a netrin receptor that collaborates with DCC in mediating turning responses to netrin-1.</title>
        <authorList>
            <person name="Ly A."/>
            <person name="Nikolaev A."/>
            <person name="Suresh G."/>
            <person name="Zheng Y."/>
            <person name="Tessier-Lavigne M."/>
            <person name="Stein E."/>
        </authorList>
    </citation>
    <scope>INTERACTION WITH DSCAM</scope>
</reference>
<reference key="8">
    <citation type="journal article" date="2016" name="J. Biol. Chem.">
        <title>An Alzheimer Disease-linked Rare Mutation Potentiates Netrin Receptor Uncoordinated-5C-induced Signaling That Merges with Amyloid beta Precursor Protein Signaling.</title>
        <authorList>
            <person name="Hashimoto Y."/>
            <person name="Toyama Y."/>
            <person name="Kusakari S."/>
            <person name="Nawa M."/>
            <person name="Matsuoka M."/>
        </authorList>
    </citation>
    <scope>INTERACTION WITH APP</scope>
</reference>
<reference key="9">
    <citation type="journal article" date="2017" name="J. Neurosci.">
        <title>Uncoupling of UNC5C with Polymerized TUBB3 in Microtubules Mediates Netrin-1 Repulsion.</title>
        <authorList>
            <person name="Shao Q."/>
            <person name="Yang T."/>
            <person name="Huang H."/>
            <person name="Alarmanazi F."/>
            <person name="Liu G."/>
        </authorList>
    </citation>
    <scope>FUNCTION</scope>
</reference>
<dbReference type="EMBL" id="U65418">
    <property type="protein sequence ID" value="AAC52971.1"/>
    <property type="molecule type" value="mRNA"/>
</dbReference>
<dbReference type="EMBL" id="AF128865">
    <property type="protein sequence ID" value="AAD28602.1"/>
    <property type="molecule type" value="mRNA"/>
</dbReference>
<dbReference type="EMBL" id="AL606831">
    <property type="status" value="NOT_ANNOTATED_CDS"/>
    <property type="molecule type" value="Genomic_DNA"/>
</dbReference>
<dbReference type="EMBL" id="AL662894">
    <property type="status" value="NOT_ANNOTATED_CDS"/>
    <property type="molecule type" value="Genomic_DNA"/>
</dbReference>
<dbReference type="EMBL" id="AL669842">
    <property type="status" value="NOT_ANNOTATED_CDS"/>
    <property type="molecule type" value="Genomic_DNA"/>
</dbReference>
<dbReference type="EMBL" id="CH466601">
    <property type="protein sequence ID" value="EDL10446.1"/>
    <property type="molecule type" value="Genomic_DNA"/>
</dbReference>
<dbReference type="EMBL" id="BC141294">
    <property type="protein sequence ID" value="AAI41295.1"/>
    <property type="molecule type" value="mRNA"/>
</dbReference>
<dbReference type="EMBL" id="U23505">
    <property type="protein sequence ID" value="AAA87938.1"/>
    <property type="molecule type" value="mRNA"/>
</dbReference>
<dbReference type="CCDS" id="CCDS24864.1"/>
<dbReference type="RefSeq" id="NP_032770.2">
    <property type="nucleotide sequence ID" value="NM_008744.2"/>
</dbReference>
<dbReference type="PDB" id="4OVE">
    <property type="method" value="X-ray"/>
    <property type="resolution" value="2.64 A"/>
    <property type="chains" value="A=23-457"/>
</dbReference>
<dbReference type="PDB" id="8SNP">
    <property type="method" value="X-ray"/>
    <property type="resolution" value="3.40 A"/>
    <property type="chains" value="A=1-604"/>
</dbReference>
<dbReference type="PDBsum" id="4OVE"/>
<dbReference type="PDBsum" id="8SNP"/>
<dbReference type="SMR" id="O09118"/>
<dbReference type="BioGRID" id="201866">
    <property type="interactions" value="7"/>
</dbReference>
<dbReference type="FunCoup" id="O09118">
    <property type="interactions" value="217"/>
</dbReference>
<dbReference type="IntAct" id="O09118">
    <property type="interactions" value="4"/>
</dbReference>
<dbReference type="STRING" id="10090.ENSMUSP00000104314"/>
<dbReference type="GlyConnect" id="2531">
    <property type="glycosylation" value="1 N-Linked glycan (1 site)"/>
</dbReference>
<dbReference type="GlyCosmos" id="O09118">
    <property type="glycosylation" value="4 sites, 1 glycan"/>
</dbReference>
<dbReference type="GlyGen" id="O09118">
    <property type="glycosylation" value="4 sites, 3 N-linked glycans (2 sites)"/>
</dbReference>
<dbReference type="iPTMnet" id="O09118"/>
<dbReference type="PhosphoSitePlus" id="O09118"/>
<dbReference type="PaxDb" id="10090-ENSMUSP00000104314"/>
<dbReference type="PeptideAtlas" id="O09118"/>
<dbReference type="ProteomicsDB" id="287480"/>
<dbReference type="Antibodypedia" id="24762">
    <property type="antibodies" value="369 antibodies from 40 providers"/>
</dbReference>
<dbReference type="DNASU" id="18208"/>
<dbReference type="Ensembl" id="ENSMUST00000021284.4">
    <property type="protein sequence ID" value="ENSMUSP00000021284.3"/>
    <property type="gene ID" value="ENSMUSG00000020902.13"/>
</dbReference>
<dbReference type="Ensembl" id="ENSMUST00000108674.9">
    <property type="protein sequence ID" value="ENSMUSP00000104314.3"/>
    <property type="gene ID" value="ENSMUSG00000020902.13"/>
</dbReference>
<dbReference type="GeneID" id="18208"/>
<dbReference type="KEGG" id="mmu:18208"/>
<dbReference type="UCSC" id="uc007jnm.1">
    <property type="organism name" value="mouse"/>
</dbReference>
<dbReference type="AGR" id="MGI:105088"/>
<dbReference type="CTD" id="9423"/>
<dbReference type="MGI" id="MGI:105088">
    <property type="gene designation" value="Ntn1"/>
</dbReference>
<dbReference type="VEuPathDB" id="HostDB:ENSMUSG00000020902"/>
<dbReference type="eggNOG" id="KOG3512">
    <property type="taxonomic scope" value="Eukaryota"/>
</dbReference>
<dbReference type="GeneTree" id="ENSGT00940000153882"/>
<dbReference type="HOGENOM" id="CLU_018213_2_0_1"/>
<dbReference type="InParanoid" id="O09118"/>
<dbReference type="OMA" id="FSQFSMR"/>
<dbReference type="OrthoDB" id="9972745at2759"/>
<dbReference type="PhylomeDB" id="O09118"/>
<dbReference type="TreeFam" id="TF352481"/>
<dbReference type="BioGRID-ORCS" id="18208">
    <property type="hits" value="1 hit in 78 CRISPR screens"/>
</dbReference>
<dbReference type="ChiTaRS" id="Ntn1">
    <property type="organism name" value="mouse"/>
</dbReference>
<dbReference type="EvolutionaryTrace" id="O09118"/>
<dbReference type="PRO" id="PR:O09118"/>
<dbReference type="Proteomes" id="UP000000589">
    <property type="component" value="Chromosome 11"/>
</dbReference>
<dbReference type="RNAct" id="O09118">
    <property type="molecule type" value="protein"/>
</dbReference>
<dbReference type="Bgee" id="ENSMUSG00000020902">
    <property type="expression patterns" value="Expressed in brain white matter and 252 other cell types or tissues"/>
</dbReference>
<dbReference type="ExpressionAtlas" id="O09118">
    <property type="expression patterns" value="baseline and differential"/>
</dbReference>
<dbReference type="GO" id="GO:0015629">
    <property type="term" value="C:actin cytoskeleton"/>
    <property type="evidence" value="ECO:0007669"/>
    <property type="project" value="Ensembl"/>
</dbReference>
<dbReference type="GO" id="GO:0005604">
    <property type="term" value="C:basement membrane"/>
    <property type="evidence" value="ECO:0000314"/>
    <property type="project" value="MGI"/>
</dbReference>
<dbReference type="GO" id="GO:0071944">
    <property type="term" value="C:cell periphery"/>
    <property type="evidence" value="ECO:0000266"/>
    <property type="project" value="MGI"/>
</dbReference>
<dbReference type="GO" id="GO:0062023">
    <property type="term" value="C:collagen-containing extracellular matrix"/>
    <property type="evidence" value="ECO:0007005"/>
    <property type="project" value="BHF-UCL"/>
</dbReference>
<dbReference type="GO" id="GO:0005737">
    <property type="term" value="C:cytoplasm"/>
    <property type="evidence" value="ECO:0000314"/>
    <property type="project" value="MGI"/>
</dbReference>
<dbReference type="GO" id="GO:0005829">
    <property type="term" value="C:cytosol"/>
    <property type="evidence" value="ECO:0007669"/>
    <property type="project" value="Ensembl"/>
</dbReference>
<dbReference type="GO" id="GO:0005576">
    <property type="term" value="C:extracellular region"/>
    <property type="evidence" value="ECO:0000250"/>
    <property type="project" value="UniProtKB"/>
</dbReference>
<dbReference type="GO" id="GO:0098978">
    <property type="term" value="C:glutamatergic synapse"/>
    <property type="evidence" value="ECO:0000314"/>
    <property type="project" value="SynGO"/>
</dbReference>
<dbReference type="GO" id="GO:0005654">
    <property type="term" value="C:nucleoplasm"/>
    <property type="evidence" value="ECO:0007669"/>
    <property type="project" value="Ensembl"/>
</dbReference>
<dbReference type="GO" id="GO:0045202">
    <property type="term" value="C:synapse"/>
    <property type="evidence" value="ECO:0000314"/>
    <property type="project" value="SynGO"/>
</dbReference>
<dbReference type="GO" id="GO:0033564">
    <property type="term" value="P:anterior/posterior axon guidance"/>
    <property type="evidence" value="ECO:0000315"/>
    <property type="project" value="MGI"/>
</dbReference>
<dbReference type="GO" id="GO:0006915">
    <property type="term" value="P:apoptotic process"/>
    <property type="evidence" value="ECO:0007669"/>
    <property type="project" value="UniProtKB-KW"/>
</dbReference>
<dbReference type="GO" id="GO:0007411">
    <property type="term" value="P:axon guidance"/>
    <property type="evidence" value="ECO:0000314"/>
    <property type="project" value="MGI"/>
</dbReference>
<dbReference type="GO" id="GO:0007409">
    <property type="term" value="P:axonogenesis"/>
    <property type="evidence" value="ECO:0000314"/>
    <property type="project" value="MGI"/>
</dbReference>
<dbReference type="GO" id="GO:0032488">
    <property type="term" value="P:Cdc42 protein signal transduction"/>
    <property type="evidence" value="ECO:0000250"/>
    <property type="project" value="UniProtKB"/>
</dbReference>
<dbReference type="GO" id="GO:0008283">
    <property type="term" value="P:cell population proliferation"/>
    <property type="evidence" value="ECO:0000315"/>
    <property type="project" value="MGI"/>
</dbReference>
<dbReference type="GO" id="GO:0098609">
    <property type="term" value="P:cell-cell adhesion"/>
    <property type="evidence" value="ECO:0000316"/>
    <property type="project" value="MGI"/>
</dbReference>
<dbReference type="GO" id="GO:0061643">
    <property type="term" value="P:chemorepulsion of axon"/>
    <property type="evidence" value="ECO:0000314"/>
    <property type="project" value="UniProtKB"/>
</dbReference>
<dbReference type="GO" id="GO:0014009">
    <property type="term" value="P:glial cell proliferation"/>
    <property type="evidence" value="ECO:0000315"/>
    <property type="project" value="MGI"/>
</dbReference>
<dbReference type="GO" id="GO:0042472">
    <property type="term" value="P:inner ear morphogenesis"/>
    <property type="evidence" value="ECO:0000315"/>
    <property type="project" value="MGI"/>
</dbReference>
<dbReference type="GO" id="GO:0030879">
    <property type="term" value="P:mammary gland development"/>
    <property type="evidence" value="ECO:0000316"/>
    <property type="project" value="MGI"/>
</dbReference>
<dbReference type="GO" id="GO:0060603">
    <property type="term" value="P:mammary gland duct morphogenesis"/>
    <property type="evidence" value="ECO:0000316"/>
    <property type="project" value="MGI"/>
</dbReference>
<dbReference type="GO" id="GO:0097475">
    <property type="term" value="P:motor neuron migration"/>
    <property type="evidence" value="ECO:0000315"/>
    <property type="project" value="MGI"/>
</dbReference>
<dbReference type="GO" id="GO:0030517">
    <property type="term" value="P:negative regulation of axon extension"/>
    <property type="evidence" value="ECO:0000314"/>
    <property type="project" value="MGI"/>
</dbReference>
<dbReference type="GO" id="GO:0001764">
    <property type="term" value="P:neuron migration"/>
    <property type="evidence" value="ECO:0000315"/>
    <property type="project" value="MGI"/>
</dbReference>
<dbReference type="GO" id="GO:0007097">
    <property type="term" value="P:nuclear migration"/>
    <property type="evidence" value="ECO:0000314"/>
    <property type="project" value="MGI"/>
</dbReference>
<dbReference type="GO" id="GO:0045773">
    <property type="term" value="P:positive regulation of axon extension"/>
    <property type="evidence" value="ECO:0000314"/>
    <property type="project" value="MGI"/>
</dbReference>
<dbReference type="GO" id="GO:2000147">
    <property type="term" value="P:positive regulation of cell motility"/>
    <property type="evidence" value="ECO:0000250"/>
    <property type="project" value="UniProtKB"/>
</dbReference>
<dbReference type="GO" id="GO:0060252">
    <property type="term" value="P:positive regulation of glial cell proliferation"/>
    <property type="evidence" value="ECO:0000315"/>
    <property type="project" value="MGI"/>
</dbReference>
<dbReference type="GO" id="GO:0007265">
    <property type="term" value="P:Ras protein signal transduction"/>
    <property type="evidence" value="ECO:0000250"/>
    <property type="project" value="UniProtKB"/>
</dbReference>
<dbReference type="GO" id="GO:0030334">
    <property type="term" value="P:regulation of cell migration"/>
    <property type="evidence" value="ECO:0000314"/>
    <property type="project" value="MGI"/>
</dbReference>
<dbReference type="GO" id="GO:1903975">
    <property type="term" value="P:regulation of glial cell migration"/>
    <property type="evidence" value="ECO:0000315"/>
    <property type="project" value="MGI"/>
</dbReference>
<dbReference type="GO" id="GO:0051963">
    <property type="term" value="P:regulation of synapse assembly"/>
    <property type="evidence" value="ECO:0000314"/>
    <property type="project" value="SynGO"/>
</dbReference>
<dbReference type="GO" id="GO:0006930">
    <property type="term" value="P:substrate-dependent cell migration, cell extension"/>
    <property type="evidence" value="ECO:0000250"/>
    <property type="project" value="UniProtKB"/>
</dbReference>
<dbReference type="CDD" id="cd00055">
    <property type="entry name" value="EGF_Lam"/>
    <property type="match status" value="3"/>
</dbReference>
<dbReference type="CDD" id="cd03579">
    <property type="entry name" value="NTR_netrin-1_like"/>
    <property type="match status" value="1"/>
</dbReference>
<dbReference type="FunFam" id="2.10.25.10:FF:000081">
    <property type="entry name" value="Netrin 1"/>
    <property type="match status" value="1"/>
</dbReference>
<dbReference type="FunFam" id="2.40.50.120:FF:000001">
    <property type="entry name" value="Netrin 1"/>
    <property type="match status" value="1"/>
</dbReference>
<dbReference type="FunFam" id="2.60.120.260:FF:000015">
    <property type="entry name" value="Netrin 1"/>
    <property type="match status" value="1"/>
</dbReference>
<dbReference type="FunFam" id="2.10.25.10:FF:000048">
    <property type="entry name" value="Netrin 3"/>
    <property type="match status" value="1"/>
</dbReference>
<dbReference type="Gene3D" id="2.40.50.120">
    <property type="match status" value="1"/>
</dbReference>
<dbReference type="Gene3D" id="2.60.120.260">
    <property type="entry name" value="Galactose-binding domain-like"/>
    <property type="match status" value="1"/>
</dbReference>
<dbReference type="Gene3D" id="2.10.25.10">
    <property type="entry name" value="Laminin"/>
    <property type="match status" value="2"/>
</dbReference>
<dbReference type="InterPro" id="IPR008979">
    <property type="entry name" value="Galactose-bd-like_sf"/>
</dbReference>
<dbReference type="InterPro" id="IPR050440">
    <property type="entry name" value="Laminin/Netrin_ECM"/>
</dbReference>
<dbReference type="InterPro" id="IPR008211">
    <property type="entry name" value="Laminin_N"/>
</dbReference>
<dbReference type="InterPro" id="IPR002049">
    <property type="entry name" value="LE_dom"/>
</dbReference>
<dbReference type="InterPro" id="IPR056863">
    <property type="entry name" value="LMN_ATRN_NET-like_EGF"/>
</dbReference>
<dbReference type="InterPro" id="IPR001134">
    <property type="entry name" value="Netrin_domain"/>
</dbReference>
<dbReference type="InterPro" id="IPR018933">
    <property type="entry name" value="Netrin_module_non-TIMP"/>
</dbReference>
<dbReference type="InterPro" id="IPR008993">
    <property type="entry name" value="TIMP-like_OB-fold"/>
</dbReference>
<dbReference type="PANTHER" id="PTHR10574:SF378">
    <property type="entry name" value="NETRIN-1"/>
    <property type="match status" value="1"/>
</dbReference>
<dbReference type="PANTHER" id="PTHR10574">
    <property type="entry name" value="NETRIN/LAMININ-RELATED"/>
    <property type="match status" value="1"/>
</dbReference>
<dbReference type="Pfam" id="PF00053">
    <property type="entry name" value="EGF_laminin"/>
    <property type="match status" value="2"/>
</dbReference>
<dbReference type="Pfam" id="PF24973">
    <property type="entry name" value="EGF_LMN_ATRN"/>
    <property type="match status" value="1"/>
</dbReference>
<dbReference type="Pfam" id="PF00055">
    <property type="entry name" value="Laminin_N"/>
    <property type="match status" value="1"/>
</dbReference>
<dbReference type="Pfam" id="PF01759">
    <property type="entry name" value="NTR"/>
    <property type="match status" value="1"/>
</dbReference>
<dbReference type="SMART" id="SM00643">
    <property type="entry name" value="C345C"/>
    <property type="match status" value="1"/>
</dbReference>
<dbReference type="SMART" id="SM00180">
    <property type="entry name" value="EGF_Lam"/>
    <property type="match status" value="3"/>
</dbReference>
<dbReference type="SMART" id="SM00136">
    <property type="entry name" value="LamNT"/>
    <property type="match status" value="1"/>
</dbReference>
<dbReference type="SUPFAM" id="SSF57196">
    <property type="entry name" value="EGF/Laminin"/>
    <property type="match status" value="3"/>
</dbReference>
<dbReference type="SUPFAM" id="SSF49785">
    <property type="entry name" value="Galactose-binding domain-like"/>
    <property type="match status" value="1"/>
</dbReference>
<dbReference type="SUPFAM" id="SSF50242">
    <property type="entry name" value="TIMP-like"/>
    <property type="match status" value="1"/>
</dbReference>
<dbReference type="PROSITE" id="PS00022">
    <property type="entry name" value="EGF_1"/>
    <property type="match status" value="2"/>
</dbReference>
<dbReference type="PROSITE" id="PS01248">
    <property type="entry name" value="EGF_LAM_1"/>
    <property type="match status" value="3"/>
</dbReference>
<dbReference type="PROSITE" id="PS50027">
    <property type="entry name" value="EGF_LAM_2"/>
    <property type="match status" value="3"/>
</dbReference>
<dbReference type="PROSITE" id="PS51117">
    <property type="entry name" value="LAMININ_NTER"/>
    <property type="match status" value="1"/>
</dbReference>
<dbReference type="PROSITE" id="PS50189">
    <property type="entry name" value="NTR"/>
    <property type="match status" value="1"/>
</dbReference>
<feature type="signal peptide" evidence="3">
    <location>
        <begin position="1"/>
        <end position="24"/>
    </location>
</feature>
<feature type="chain" id="PRO_0000017083" description="Netrin-1">
    <location>
        <begin position="25"/>
        <end position="604"/>
    </location>
</feature>
<feature type="domain" description="Laminin N-terminal" evidence="6">
    <location>
        <begin position="47"/>
        <end position="284"/>
    </location>
</feature>
<feature type="domain" description="Laminin EGF-like 1" evidence="5">
    <location>
        <begin position="285"/>
        <end position="340"/>
    </location>
</feature>
<feature type="domain" description="Laminin EGF-like 2" evidence="5">
    <location>
        <begin position="341"/>
        <end position="403"/>
    </location>
</feature>
<feature type="domain" description="Laminin EGF-like 3" evidence="5">
    <location>
        <begin position="404"/>
        <end position="453"/>
    </location>
</feature>
<feature type="domain" description="NTR" evidence="4">
    <location>
        <begin position="472"/>
        <end position="601"/>
    </location>
</feature>
<feature type="short sequence motif" description="Cell attachment site" evidence="3">
    <location>
        <begin position="530"/>
        <end position="532"/>
    </location>
</feature>
<feature type="glycosylation site" description="N-linked (GlcNAc...) asparagine" evidence="3">
    <location>
        <position position="95"/>
    </location>
</feature>
<feature type="glycosylation site" description="N-linked (GlcNAc...) asparagine" evidence="3">
    <location>
        <position position="116"/>
    </location>
</feature>
<feature type="glycosylation site" description="N-linked (GlcNAc...) asparagine" evidence="3">
    <location>
        <position position="131"/>
    </location>
</feature>
<feature type="glycosylation site" description="N-linked (GlcNAc...) asparagine" evidence="3">
    <location>
        <position position="417"/>
    </location>
</feature>
<feature type="disulfide bond" evidence="1">
    <location>
        <begin position="119"/>
        <end position="152"/>
    </location>
</feature>
<feature type="disulfide bond" evidence="1">
    <location>
        <begin position="285"/>
        <end position="294"/>
    </location>
</feature>
<feature type="disulfide bond" evidence="1">
    <location>
        <begin position="287"/>
        <end position="304"/>
    </location>
</feature>
<feature type="disulfide bond" evidence="1">
    <location>
        <begin position="306"/>
        <end position="315"/>
    </location>
</feature>
<feature type="disulfide bond" evidence="1">
    <location>
        <begin position="318"/>
        <end position="338"/>
    </location>
</feature>
<feature type="disulfide bond" evidence="1">
    <location>
        <begin position="341"/>
        <end position="350"/>
    </location>
</feature>
<feature type="disulfide bond" evidence="1">
    <location>
        <begin position="343"/>
        <end position="368"/>
    </location>
</feature>
<feature type="disulfide bond" evidence="1">
    <location>
        <begin position="371"/>
        <end position="380"/>
    </location>
</feature>
<feature type="disulfide bond" evidence="1">
    <location>
        <begin position="383"/>
        <end position="401"/>
    </location>
</feature>
<feature type="disulfide bond" evidence="1">
    <location>
        <begin position="404"/>
        <end position="416"/>
    </location>
</feature>
<feature type="disulfide bond" evidence="1">
    <location>
        <begin position="406"/>
        <end position="423"/>
    </location>
</feature>
<feature type="disulfide bond" evidence="1">
    <location>
        <begin position="425"/>
        <end position="434"/>
    </location>
</feature>
<feature type="disulfide bond" evidence="1">
    <location>
        <begin position="437"/>
        <end position="451"/>
    </location>
</feature>
<feature type="disulfide bond" evidence="1">
    <location>
        <begin position="472"/>
        <end position="544"/>
    </location>
</feature>
<feature type="disulfide bond" evidence="1">
    <location>
        <begin position="491"/>
        <end position="601"/>
    </location>
</feature>
<feature type="sequence conflict" description="In Ref. 1; AAC52971." evidence="13" ref="1">
    <location>
        <position position="24"/>
    </location>
</feature>
<feature type="sequence conflict" description="In Ref. 1; AAC52971 and 2; AAD28602." evidence="13" ref="1 2">
    <original>L</original>
    <variation>V</variation>
    <location>
        <position position="88"/>
    </location>
</feature>
<feature type="sequence conflict" description="In Ref. 2; AAD28602." evidence="13" ref="2">
    <original>V</original>
    <variation>A</variation>
    <location>
        <position position="466"/>
    </location>
</feature>
<feature type="strand" evidence="14">
    <location>
        <begin position="40"/>
        <end position="42"/>
    </location>
</feature>
<feature type="turn" evidence="14">
    <location>
        <begin position="58"/>
        <end position="61"/>
    </location>
</feature>
<feature type="strand" evidence="14">
    <location>
        <begin position="65"/>
        <end position="67"/>
    </location>
</feature>
<feature type="strand" evidence="14">
    <location>
        <begin position="75"/>
        <end position="81"/>
    </location>
</feature>
<feature type="strand" evidence="14">
    <location>
        <begin position="83"/>
        <end position="85"/>
    </location>
</feature>
<feature type="strand" evidence="14">
    <location>
        <begin position="88"/>
        <end position="94"/>
    </location>
</feature>
<feature type="turn" evidence="14">
    <location>
        <begin position="99"/>
        <end position="101"/>
    </location>
</feature>
<feature type="helix" evidence="14">
    <location>
        <begin position="105"/>
        <end position="108"/>
    </location>
</feature>
<feature type="strand" evidence="14">
    <location>
        <begin position="132"/>
        <end position="153"/>
    </location>
</feature>
<feature type="strand" evidence="14">
    <location>
        <begin position="157"/>
        <end position="166"/>
    </location>
</feature>
<feature type="strand" evidence="14">
    <location>
        <begin position="172"/>
        <end position="177"/>
    </location>
</feature>
<feature type="helix" evidence="14">
    <location>
        <begin position="181"/>
        <end position="185"/>
    </location>
</feature>
<feature type="strand" evidence="14">
    <location>
        <begin position="197"/>
        <end position="199"/>
    </location>
</feature>
<feature type="helix" evidence="14">
    <location>
        <begin position="206"/>
        <end position="208"/>
    </location>
</feature>
<feature type="strand" evidence="14">
    <location>
        <begin position="213"/>
        <end position="215"/>
    </location>
</feature>
<feature type="strand" evidence="14">
    <location>
        <begin position="217"/>
        <end position="221"/>
    </location>
</feature>
<feature type="turn" evidence="14">
    <location>
        <begin position="222"/>
        <end position="225"/>
    </location>
</feature>
<feature type="helix" evidence="14">
    <location>
        <begin position="227"/>
        <end position="234"/>
    </location>
</feature>
<feature type="helix" evidence="14">
    <location>
        <begin position="236"/>
        <end position="241"/>
    </location>
</feature>
<feature type="strand" evidence="14">
    <location>
        <begin position="243"/>
        <end position="253"/>
    </location>
</feature>
<feature type="strand" evidence="14">
    <location>
        <begin position="275"/>
        <end position="285"/>
    </location>
</feature>
<feature type="strand" evidence="14">
    <location>
        <begin position="294"/>
        <end position="296"/>
    </location>
</feature>
<feature type="strand" evidence="14">
    <location>
        <begin position="302"/>
        <end position="304"/>
    </location>
</feature>
<feature type="turn" evidence="14">
    <location>
        <begin position="312"/>
        <end position="315"/>
    </location>
</feature>
<feature type="strand" evidence="14">
    <location>
        <begin position="348"/>
        <end position="352"/>
    </location>
</feature>
<feature type="helix" evidence="14">
    <location>
        <begin position="354"/>
        <end position="359"/>
    </location>
</feature>
<feature type="strand" evidence="14">
    <location>
        <begin position="366"/>
        <end position="370"/>
    </location>
</feature>
<feature type="strand" evidence="14">
    <location>
        <begin position="373"/>
        <end position="376"/>
    </location>
</feature>
<feature type="turn" evidence="14">
    <location>
        <begin position="377"/>
        <end position="380"/>
    </location>
</feature>
<feature type="strand" evidence="14">
    <location>
        <begin position="387"/>
        <end position="389"/>
    </location>
</feature>
<feature type="strand" evidence="14">
    <location>
        <begin position="401"/>
        <end position="403"/>
    </location>
</feature>
<feature type="turn" evidence="14">
    <location>
        <begin position="408"/>
        <end position="410"/>
    </location>
</feature>
<feature type="turn" evidence="14">
    <location>
        <begin position="418"/>
        <end position="420"/>
    </location>
</feature>
<feature type="turn" evidence="14">
    <location>
        <begin position="431"/>
        <end position="434"/>
    </location>
</feature>
<feature type="strand" evidence="14">
    <location>
        <begin position="441"/>
        <end position="443"/>
    </location>
</feature>
<feature type="strand" evidence="14">
    <location>
        <begin position="451"/>
        <end position="453"/>
    </location>
</feature>
<proteinExistence type="evidence at protein level"/>
<gene>
    <name type="primary">Ntn1</name>
</gene>
<keyword id="KW-0002">3D-structure</keyword>
<keyword id="KW-0053">Apoptosis</keyword>
<keyword id="KW-0963">Cytoplasm</keyword>
<keyword id="KW-1015">Disulfide bond</keyword>
<keyword id="KW-0325">Glycoprotein</keyword>
<keyword id="KW-0424">Laminin EGF-like domain</keyword>
<keyword id="KW-1185">Reference proteome</keyword>
<keyword id="KW-0677">Repeat</keyword>
<keyword id="KW-0964">Secreted</keyword>
<keyword id="KW-0732">Signal</keyword>
<accession>O09118</accession>
<accession>B1ARR0</accession>
<accession>Q60832</accession>
<accession>Q9QY50</accession>
<protein>
    <recommendedName>
        <fullName>Netrin-1</fullName>
    </recommendedName>
</protein>